<feature type="signal peptide" evidence="1">
    <location>
        <begin position="1"/>
        <end position="18"/>
    </location>
</feature>
<feature type="chain" id="PRO_5006059076" description="Secreted RxLR effector protein RXLR-C12">
    <location>
        <begin position="19"/>
        <end position="173"/>
    </location>
</feature>
<feature type="short sequence motif" description="RxLR-dEER" evidence="6">
    <location>
        <begin position="41"/>
        <end position="55"/>
    </location>
</feature>
<feature type="glycosylation site" description="N-linked (GlcNAc...) asparagine" evidence="2">
    <location>
        <position position="155"/>
    </location>
</feature>
<gene>
    <name evidence="4" type="primary">RXLR-C12</name>
</gene>
<reference key="1">
    <citation type="journal article" date="2015" name="BMC Genomics">
        <title>Genome analyses of the sunflower pathogen Plasmopara halstedii provide insights into effector evolution in downy mildews and Phytophthora.</title>
        <authorList>
            <person name="Sharma R."/>
            <person name="Xia X."/>
            <person name="Cano L.M."/>
            <person name="Evangelisti E."/>
            <person name="Kemen E."/>
            <person name="Judelson H."/>
            <person name="Oome S."/>
            <person name="Sambles C."/>
            <person name="van den Hoogen D.J."/>
            <person name="Kitner M."/>
            <person name="Klein J."/>
            <person name="Meijer H.J."/>
            <person name="Spring O."/>
            <person name="Win J."/>
            <person name="Zipper R."/>
            <person name="Bode H.B."/>
            <person name="Govers F."/>
            <person name="Kamoun S."/>
            <person name="Schornack S."/>
            <person name="Studholme D.J."/>
            <person name="Van den Ackerveken G."/>
            <person name="Thines M."/>
        </authorList>
    </citation>
    <scope>NUCLEOTIDE SEQUENCE [LARGE SCALE GENOMIC DNA]</scope>
</reference>
<reference key="2">
    <citation type="journal article" date="2019" name="Plant J.">
        <title>Sunflower resistance to multiple downy mildew pathotypes revealed by recognition of conserved effectors of the oomycete Plasmopara halstedii.</title>
        <authorList>
            <person name="Pecrix Y."/>
            <person name="Buendia L."/>
            <person name="Penouilh-Suzette C."/>
            <person name="Marechaux M."/>
            <person name="Legrand L."/>
            <person name="Bouchez O."/>
            <person name="Rengel D."/>
            <person name="Gouzy J."/>
            <person name="Cottret L."/>
            <person name="Vear F."/>
            <person name="Godiard L."/>
        </authorList>
    </citation>
    <scope>DOMAIN</scope>
    <scope>INDUCTION</scope>
    <scope>FUNCTION</scope>
    <scope>SUBCELLULAR LOCATION</scope>
</reference>
<keyword id="KW-0325">Glycoprotein</keyword>
<keyword id="KW-1035">Host cytoplasm</keyword>
<keyword id="KW-1048">Host nucleus</keyword>
<keyword id="KW-1185">Reference proteome</keyword>
<keyword id="KW-0964">Secreted</keyword>
<keyword id="KW-0732">Signal</keyword>
<keyword id="KW-0843">Virulence</keyword>
<proteinExistence type="evidence at transcript level"/>
<sequence>MLQFATAFLAISANVVMTQPNQEYIAPGARVSSNYRDMTIRRLRTHEIGTVPEERMPIHELEIEDLITIIASKVVPELSHSESMSLLSAEAARSRSFKDMAADELDVDGALDLLKAVQSKPETTDMTPTFGVWEESNFDSATVEKLFDSKKNDENESHIKTIVEAYKKFRKEK</sequence>
<comment type="function">
    <text evidence="3">Secreted effector that suppresses pattern-triggered immunity (PTI) in plant host.</text>
</comment>
<comment type="subcellular location">
    <subcellularLocation>
        <location evidence="3">Secreted</location>
    </subcellularLocation>
    <subcellularLocation>
        <location evidence="3">Host cytoplasm</location>
    </subcellularLocation>
    <subcellularLocation>
        <location evidence="3">Host nucleus</location>
    </subcellularLocation>
</comment>
<comment type="induction">
    <text evidence="3">Expression is up-regulated during the late plant infection stages.</text>
</comment>
<comment type="domain">
    <text evidence="6">The RxLR-dEER motif acts to carry the protein into the host cell cytoplasm through binding to cell surface phosphatidylinositol-3-phosphate.</text>
</comment>
<comment type="similarity">
    <text evidence="5">Belongs to the RxLR effector family.</text>
</comment>
<dbReference type="EMBL" id="CCYD01002371">
    <property type="protein sequence ID" value="CEG47148.1"/>
    <property type="molecule type" value="Genomic_DNA"/>
</dbReference>
<dbReference type="GlyCosmos" id="A0A0P1AZU2">
    <property type="glycosylation" value="1 site, No reported glycans"/>
</dbReference>
<dbReference type="EnsemblProtists" id="CEG47148">
    <property type="protein sequence ID" value="CEG47148"/>
    <property type="gene ID" value="CEG47148"/>
</dbReference>
<dbReference type="Proteomes" id="UP000054928">
    <property type="component" value="Unassembled WGS sequence"/>
</dbReference>
<dbReference type="GO" id="GO:0005576">
    <property type="term" value="C:extracellular region"/>
    <property type="evidence" value="ECO:0007669"/>
    <property type="project" value="UniProtKB-SubCell"/>
</dbReference>
<dbReference type="GO" id="GO:0030430">
    <property type="term" value="C:host cell cytoplasm"/>
    <property type="evidence" value="ECO:0007669"/>
    <property type="project" value="UniProtKB-SubCell"/>
</dbReference>
<dbReference type="GO" id="GO:0042025">
    <property type="term" value="C:host cell nucleus"/>
    <property type="evidence" value="ECO:0007669"/>
    <property type="project" value="UniProtKB-SubCell"/>
</dbReference>
<protein>
    <recommendedName>
        <fullName evidence="4">Secreted RxLR effector protein RXLR-C12</fullName>
    </recommendedName>
</protein>
<accession>A0A0P1AZU2</accession>
<name>RLR12_PLAHL</name>
<organism>
    <name type="scientific">Plasmopara halstedii</name>
    <name type="common">Downy mildew of sunflower</name>
    <dbReference type="NCBI Taxonomy" id="4781"/>
    <lineage>
        <taxon>Eukaryota</taxon>
        <taxon>Sar</taxon>
        <taxon>Stramenopiles</taxon>
        <taxon>Oomycota</taxon>
        <taxon>Peronosporales</taxon>
        <taxon>Peronosporaceae</taxon>
        <taxon>Plasmopara</taxon>
    </lineage>
</organism>
<evidence type="ECO:0000255" key="1"/>
<evidence type="ECO:0000255" key="2">
    <source>
        <dbReference type="PROSITE-ProRule" id="PRU00498"/>
    </source>
</evidence>
<evidence type="ECO:0000269" key="3">
    <source>
    </source>
</evidence>
<evidence type="ECO:0000303" key="4">
    <source>
    </source>
</evidence>
<evidence type="ECO:0000305" key="5"/>
<evidence type="ECO:0000305" key="6">
    <source>
    </source>
</evidence>